<sequence length="426" mass="47529">MLDPKLFRTQLPEIAAKLAKRGFTLDVERIQQLEDTRKVVQVECENLQQERNTRSKSIGKAKAAGEDIAPLLKEVDNLKSALSEAEQKLGAVQAELDEIIAGVPNVLADEVPEGKNEDDNVEVSQWGTPREFDFEVKDHVDVGAGLKGLDFETAGKITGSRFAVMTGAVARLHRALIQFMLNTHTGEHGYDEIYVPYIVNKDSLYGTGQLPKFEEDLFKLRDDRDFYLIPTAEVPVTNMMRDEIIDEKQLPVRFACHTPCFRSEAGSYGRDTRGMIRQHQFEKVELVQFVKPGESMAALESLVGHAETILQKLSLPYRKVILCGGDTGFSSTKTYDLEVWLPSQNTYREISSCSNFGDFQARRMKARYRNAETGKPELLHTLNGSGLAIGRTLVAILENYQQADGSLAIPEVLQPFMNGQTSISAP</sequence>
<proteinExistence type="inferred from homology"/>
<keyword id="KW-0030">Aminoacyl-tRNA synthetase</keyword>
<keyword id="KW-0067">ATP-binding</keyword>
<keyword id="KW-0963">Cytoplasm</keyword>
<keyword id="KW-0436">Ligase</keyword>
<keyword id="KW-0547">Nucleotide-binding</keyword>
<keyword id="KW-0648">Protein biosynthesis</keyword>
<keyword id="KW-1185">Reference proteome</keyword>
<name>SYS_TERTT</name>
<reference key="1">
    <citation type="journal article" date="2009" name="PLoS ONE">
        <title>The complete genome of Teredinibacter turnerae T7901: an intracellular endosymbiont of marine wood-boring bivalves (shipworms).</title>
        <authorList>
            <person name="Yang J.C."/>
            <person name="Madupu R."/>
            <person name="Durkin A.S."/>
            <person name="Ekborg N.A."/>
            <person name="Pedamallu C.S."/>
            <person name="Hostetler J.B."/>
            <person name="Radune D."/>
            <person name="Toms B.S."/>
            <person name="Henrissat B."/>
            <person name="Coutinho P.M."/>
            <person name="Schwarz S."/>
            <person name="Field L."/>
            <person name="Trindade-Silva A.E."/>
            <person name="Soares C.A.G."/>
            <person name="Elshahawi S."/>
            <person name="Hanora A."/>
            <person name="Schmidt E.W."/>
            <person name="Haygood M.G."/>
            <person name="Posfai J."/>
            <person name="Benner J."/>
            <person name="Madinger C."/>
            <person name="Nove J."/>
            <person name="Anton B."/>
            <person name="Chaudhary K."/>
            <person name="Foster J."/>
            <person name="Holman A."/>
            <person name="Kumar S."/>
            <person name="Lessard P.A."/>
            <person name="Luyten Y.A."/>
            <person name="Slatko B."/>
            <person name="Wood N."/>
            <person name="Wu B."/>
            <person name="Teplitski M."/>
            <person name="Mougous J.D."/>
            <person name="Ward N."/>
            <person name="Eisen J.A."/>
            <person name="Badger J.H."/>
            <person name="Distel D.L."/>
        </authorList>
    </citation>
    <scope>NUCLEOTIDE SEQUENCE [LARGE SCALE GENOMIC DNA]</scope>
    <source>
        <strain>ATCC 39867 / T7901</strain>
    </source>
</reference>
<accession>C5BIK4</accession>
<organism>
    <name type="scientific">Teredinibacter turnerae (strain ATCC 39867 / T7901)</name>
    <dbReference type="NCBI Taxonomy" id="377629"/>
    <lineage>
        <taxon>Bacteria</taxon>
        <taxon>Pseudomonadati</taxon>
        <taxon>Pseudomonadota</taxon>
        <taxon>Gammaproteobacteria</taxon>
        <taxon>Cellvibrionales</taxon>
        <taxon>Cellvibrionaceae</taxon>
        <taxon>Teredinibacter</taxon>
    </lineage>
</organism>
<gene>
    <name evidence="1" type="primary">serS</name>
    <name type="ordered locus">TERTU_1973</name>
</gene>
<protein>
    <recommendedName>
        <fullName evidence="1">Serine--tRNA ligase</fullName>
        <ecNumber evidence="1">6.1.1.11</ecNumber>
    </recommendedName>
    <alternativeName>
        <fullName evidence="1">Seryl-tRNA synthetase</fullName>
        <shortName evidence="1">SerRS</shortName>
    </alternativeName>
    <alternativeName>
        <fullName evidence="1">Seryl-tRNA(Ser/Sec) synthetase</fullName>
    </alternativeName>
</protein>
<evidence type="ECO:0000255" key="1">
    <source>
        <dbReference type="HAMAP-Rule" id="MF_00176"/>
    </source>
</evidence>
<comment type="function">
    <text evidence="1">Catalyzes the attachment of serine to tRNA(Ser). Is also able to aminoacylate tRNA(Sec) with serine, to form the misacylated tRNA L-seryl-tRNA(Sec), which will be further converted into selenocysteinyl-tRNA(Sec).</text>
</comment>
<comment type="catalytic activity">
    <reaction evidence="1">
        <text>tRNA(Ser) + L-serine + ATP = L-seryl-tRNA(Ser) + AMP + diphosphate + H(+)</text>
        <dbReference type="Rhea" id="RHEA:12292"/>
        <dbReference type="Rhea" id="RHEA-COMP:9669"/>
        <dbReference type="Rhea" id="RHEA-COMP:9703"/>
        <dbReference type="ChEBI" id="CHEBI:15378"/>
        <dbReference type="ChEBI" id="CHEBI:30616"/>
        <dbReference type="ChEBI" id="CHEBI:33019"/>
        <dbReference type="ChEBI" id="CHEBI:33384"/>
        <dbReference type="ChEBI" id="CHEBI:78442"/>
        <dbReference type="ChEBI" id="CHEBI:78533"/>
        <dbReference type="ChEBI" id="CHEBI:456215"/>
        <dbReference type="EC" id="6.1.1.11"/>
    </reaction>
</comment>
<comment type="catalytic activity">
    <reaction evidence="1">
        <text>tRNA(Sec) + L-serine + ATP = L-seryl-tRNA(Sec) + AMP + diphosphate + H(+)</text>
        <dbReference type="Rhea" id="RHEA:42580"/>
        <dbReference type="Rhea" id="RHEA-COMP:9742"/>
        <dbReference type="Rhea" id="RHEA-COMP:10128"/>
        <dbReference type="ChEBI" id="CHEBI:15378"/>
        <dbReference type="ChEBI" id="CHEBI:30616"/>
        <dbReference type="ChEBI" id="CHEBI:33019"/>
        <dbReference type="ChEBI" id="CHEBI:33384"/>
        <dbReference type="ChEBI" id="CHEBI:78442"/>
        <dbReference type="ChEBI" id="CHEBI:78533"/>
        <dbReference type="ChEBI" id="CHEBI:456215"/>
        <dbReference type="EC" id="6.1.1.11"/>
    </reaction>
</comment>
<comment type="pathway">
    <text evidence="1">Aminoacyl-tRNA biosynthesis; selenocysteinyl-tRNA(Sec) biosynthesis; L-seryl-tRNA(Sec) from L-serine and tRNA(Sec): step 1/1.</text>
</comment>
<comment type="subunit">
    <text evidence="1">Homodimer. The tRNA molecule binds across the dimer.</text>
</comment>
<comment type="subcellular location">
    <subcellularLocation>
        <location evidence="1">Cytoplasm</location>
    </subcellularLocation>
</comment>
<comment type="domain">
    <text evidence="1">Consists of two distinct domains, a catalytic core and a N-terminal extension that is involved in tRNA binding.</text>
</comment>
<comment type="similarity">
    <text evidence="1">Belongs to the class-II aminoacyl-tRNA synthetase family. Type-1 seryl-tRNA synthetase subfamily.</text>
</comment>
<feature type="chain" id="PRO_1000203775" description="Serine--tRNA ligase">
    <location>
        <begin position="1"/>
        <end position="426"/>
    </location>
</feature>
<feature type="binding site" evidence="1">
    <location>
        <begin position="231"/>
        <end position="233"/>
    </location>
    <ligand>
        <name>L-serine</name>
        <dbReference type="ChEBI" id="CHEBI:33384"/>
    </ligand>
</feature>
<feature type="binding site" evidence="1">
    <location>
        <begin position="262"/>
        <end position="264"/>
    </location>
    <ligand>
        <name>ATP</name>
        <dbReference type="ChEBI" id="CHEBI:30616"/>
    </ligand>
</feature>
<feature type="binding site" evidence="1">
    <location>
        <position position="285"/>
    </location>
    <ligand>
        <name>L-serine</name>
        <dbReference type="ChEBI" id="CHEBI:33384"/>
    </ligand>
</feature>
<feature type="binding site" evidence="1">
    <location>
        <begin position="349"/>
        <end position="352"/>
    </location>
    <ligand>
        <name>ATP</name>
        <dbReference type="ChEBI" id="CHEBI:30616"/>
    </ligand>
</feature>
<feature type="binding site" evidence="1">
    <location>
        <position position="385"/>
    </location>
    <ligand>
        <name>L-serine</name>
        <dbReference type="ChEBI" id="CHEBI:33384"/>
    </ligand>
</feature>
<dbReference type="EC" id="6.1.1.11" evidence="1"/>
<dbReference type="EMBL" id="CP001614">
    <property type="protein sequence ID" value="ACR12971.1"/>
    <property type="molecule type" value="Genomic_DNA"/>
</dbReference>
<dbReference type="RefSeq" id="WP_015819084.1">
    <property type="nucleotide sequence ID" value="NC_012997.1"/>
</dbReference>
<dbReference type="SMR" id="C5BIK4"/>
<dbReference type="STRING" id="377629.TERTU_1973"/>
<dbReference type="KEGG" id="ttu:TERTU_1973"/>
<dbReference type="eggNOG" id="COG0172">
    <property type="taxonomic scope" value="Bacteria"/>
</dbReference>
<dbReference type="HOGENOM" id="CLU_023797_1_1_6"/>
<dbReference type="OrthoDB" id="9804647at2"/>
<dbReference type="UniPathway" id="UPA00906">
    <property type="reaction ID" value="UER00895"/>
</dbReference>
<dbReference type="Proteomes" id="UP000009080">
    <property type="component" value="Chromosome"/>
</dbReference>
<dbReference type="GO" id="GO:0005737">
    <property type="term" value="C:cytoplasm"/>
    <property type="evidence" value="ECO:0007669"/>
    <property type="project" value="UniProtKB-SubCell"/>
</dbReference>
<dbReference type="GO" id="GO:0005524">
    <property type="term" value="F:ATP binding"/>
    <property type="evidence" value="ECO:0007669"/>
    <property type="project" value="UniProtKB-UniRule"/>
</dbReference>
<dbReference type="GO" id="GO:0004828">
    <property type="term" value="F:serine-tRNA ligase activity"/>
    <property type="evidence" value="ECO:0007669"/>
    <property type="project" value="UniProtKB-UniRule"/>
</dbReference>
<dbReference type="GO" id="GO:0016260">
    <property type="term" value="P:selenocysteine biosynthetic process"/>
    <property type="evidence" value="ECO:0007669"/>
    <property type="project" value="UniProtKB-UniRule"/>
</dbReference>
<dbReference type="GO" id="GO:0006434">
    <property type="term" value="P:seryl-tRNA aminoacylation"/>
    <property type="evidence" value="ECO:0007669"/>
    <property type="project" value="UniProtKB-UniRule"/>
</dbReference>
<dbReference type="CDD" id="cd00770">
    <property type="entry name" value="SerRS_core"/>
    <property type="match status" value="1"/>
</dbReference>
<dbReference type="Gene3D" id="3.30.930.10">
    <property type="entry name" value="Bira Bifunctional Protein, Domain 2"/>
    <property type="match status" value="1"/>
</dbReference>
<dbReference type="Gene3D" id="1.10.287.40">
    <property type="entry name" value="Serine-tRNA synthetase, tRNA binding domain"/>
    <property type="match status" value="1"/>
</dbReference>
<dbReference type="HAMAP" id="MF_00176">
    <property type="entry name" value="Ser_tRNA_synth_type1"/>
    <property type="match status" value="1"/>
</dbReference>
<dbReference type="InterPro" id="IPR002314">
    <property type="entry name" value="aa-tRNA-synt_IIb"/>
</dbReference>
<dbReference type="InterPro" id="IPR006195">
    <property type="entry name" value="aa-tRNA-synth_II"/>
</dbReference>
<dbReference type="InterPro" id="IPR045864">
    <property type="entry name" value="aa-tRNA-synth_II/BPL/LPL"/>
</dbReference>
<dbReference type="InterPro" id="IPR002317">
    <property type="entry name" value="Ser-tRNA-ligase_type_1"/>
</dbReference>
<dbReference type="InterPro" id="IPR015866">
    <property type="entry name" value="Ser-tRNA-synth_1_N"/>
</dbReference>
<dbReference type="InterPro" id="IPR042103">
    <property type="entry name" value="SerRS_1_N_sf"/>
</dbReference>
<dbReference type="InterPro" id="IPR033729">
    <property type="entry name" value="SerRS_core"/>
</dbReference>
<dbReference type="InterPro" id="IPR010978">
    <property type="entry name" value="tRNA-bd_arm"/>
</dbReference>
<dbReference type="NCBIfam" id="TIGR00414">
    <property type="entry name" value="serS"/>
    <property type="match status" value="1"/>
</dbReference>
<dbReference type="PANTHER" id="PTHR43697:SF1">
    <property type="entry name" value="SERINE--TRNA LIGASE"/>
    <property type="match status" value="1"/>
</dbReference>
<dbReference type="PANTHER" id="PTHR43697">
    <property type="entry name" value="SERYL-TRNA SYNTHETASE"/>
    <property type="match status" value="1"/>
</dbReference>
<dbReference type="Pfam" id="PF02403">
    <property type="entry name" value="Seryl_tRNA_N"/>
    <property type="match status" value="1"/>
</dbReference>
<dbReference type="Pfam" id="PF00587">
    <property type="entry name" value="tRNA-synt_2b"/>
    <property type="match status" value="1"/>
</dbReference>
<dbReference type="PIRSF" id="PIRSF001529">
    <property type="entry name" value="Ser-tRNA-synth_IIa"/>
    <property type="match status" value="1"/>
</dbReference>
<dbReference type="PRINTS" id="PR00981">
    <property type="entry name" value="TRNASYNTHSER"/>
</dbReference>
<dbReference type="SUPFAM" id="SSF55681">
    <property type="entry name" value="Class II aaRS and biotin synthetases"/>
    <property type="match status" value="1"/>
</dbReference>
<dbReference type="SUPFAM" id="SSF46589">
    <property type="entry name" value="tRNA-binding arm"/>
    <property type="match status" value="1"/>
</dbReference>
<dbReference type="PROSITE" id="PS50862">
    <property type="entry name" value="AA_TRNA_LIGASE_II"/>
    <property type="match status" value="1"/>
</dbReference>